<keyword id="KW-0997">Cell inner membrane</keyword>
<keyword id="KW-1003">Cell membrane</keyword>
<keyword id="KW-0444">Lipid biosynthesis</keyword>
<keyword id="KW-0443">Lipid metabolism</keyword>
<keyword id="KW-0472">Membrane</keyword>
<keyword id="KW-0594">Phospholipid biosynthesis</keyword>
<keyword id="KW-1208">Phospholipid metabolism</keyword>
<keyword id="KW-1185">Reference proteome</keyword>
<keyword id="KW-0808">Transferase</keyword>
<keyword id="KW-0812">Transmembrane</keyword>
<keyword id="KW-1133">Transmembrane helix</keyword>
<comment type="function">
    <text evidence="1">Catalyzes the transfer of an acyl group from acyl-phosphate (acyl-PO(4)) to glycerol-3-phosphate (G3P) to form lysophosphatidic acid (LPA). This enzyme utilizes acyl-phosphate as fatty acyl donor, but not acyl-CoA or acyl-ACP.</text>
</comment>
<comment type="catalytic activity">
    <reaction evidence="1">
        <text>an acyl phosphate + sn-glycerol 3-phosphate = a 1-acyl-sn-glycero-3-phosphate + phosphate</text>
        <dbReference type="Rhea" id="RHEA:34075"/>
        <dbReference type="ChEBI" id="CHEBI:43474"/>
        <dbReference type="ChEBI" id="CHEBI:57597"/>
        <dbReference type="ChEBI" id="CHEBI:57970"/>
        <dbReference type="ChEBI" id="CHEBI:59918"/>
        <dbReference type="EC" id="2.3.1.275"/>
    </reaction>
</comment>
<comment type="pathway">
    <text evidence="1">Lipid metabolism; phospholipid metabolism.</text>
</comment>
<comment type="subunit">
    <text evidence="1">Probably interacts with PlsX.</text>
</comment>
<comment type="subcellular location">
    <subcellularLocation>
        <location evidence="1">Cell inner membrane</location>
        <topology evidence="1">Multi-pass membrane protein</topology>
    </subcellularLocation>
</comment>
<comment type="similarity">
    <text evidence="1">Belongs to the PlsY family.</text>
</comment>
<proteinExistence type="inferred from homology"/>
<dbReference type="EC" id="2.3.1.275" evidence="1"/>
<dbReference type="EMBL" id="CP000284">
    <property type="protein sequence ID" value="ABE50594.1"/>
    <property type="molecule type" value="Genomic_DNA"/>
</dbReference>
<dbReference type="RefSeq" id="WP_011480547.1">
    <property type="nucleotide sequence ID" value="NC_007947.1"/>
</dbReference>
<dbReference type="SMR" id="Q1GYU3"/>
<dbReference type="STRING" id="265072.Mfla_2327"/>
<dbReference type="KEGG" id="mfa:Mfla_2327"/>
<dbReference type="eggNOG" id="COG0344">
    <property type="taxonomic scope" value="Bacteria"/>
</dbReference>
<dbReference type="HOGENOM" id="CLU_081254_0_0_4"/>
<dbReference type="OrthoDB" id="9777124at2"/>
<dbReference type="UniPathway" id="UPA00085"/>
<dbReference type="Proteomes" id="UP000002440">
    <property type="component" value="Chromosome"/>
</dbReference>
<dbReference type="GO" id="GO:0005886">
    <property type="term" value="C:plasma membrane"/>
    <property type="evidence" value="ECO:0007669"/>
    <property type="project" value="UniProtKB-SubCell"/>
</dbReference>
<dbReference type="GO" id="GO:0043772">
    <property type="term" value="F:acyl-phosphate glycerol-3-phosphate acyltransferase activity"/>
    <property type="evidence" value="ECO:0007669"/>
    <property type="project" value="UniProtKB-UniRule"/>
</dbReference>
<dbReference type="GO" id="GO:0008654">
    <property type="term" value="P:phospholipid biosynthetic process"/>
    <property type="evidence" value="ECO:0007669"/>
    <property type="project" value="UniProtKB-UniRule"/>
</dbReference>
<dbReference type="HAMAP" id="MF_01043">
    <property type="entry name" value="PlsY"/>
    <property type="match status" value="1"/>
</dbReference>
<dbReference type="InterPro" id="IPR003811">
    <property type="entry name" value="G3P_acylTferase_PlsY"/>
</dbReference>
<dbReference type="NCBIfam" id="TIGR00023">
    <property type="entry name" value="glycerol-3-phosphate 1-O-acyltransferase PlsY"/>
    <property type="match status" value="1"/>
</dbReference>
<dbReference type="PANTHER" id="PTHR30309:SF0">
    <property type="entry name" value="GLYCEROL-3-PHOSPHATE ACYLTRANSFERASE-RELATED"/>
    <property type="match status" value="1"/>
</dbReference>
<dbReference type="PANTHER" id="PTHR30309">
    <property type="entry name" value="INNER MEMBRANE PROTEIN YGIH"/>
    <property type="match status" value="1"/>
</dbReference>
<dbReference type="Pfam" id="PF02660">
    <property type="entry name" value="G3P_acyltransf"/>
    <property type="match status" value="1"/>
</dbReference>
<dbReference type="SMART" id="SM01207">
    <property type="entry name" value="G3P_acyltransf"/>
    <property type="match status" value="1"/>
</dbReference>
<name>PLSY_METFK</name>
<protein>
    <recommendedName>
        <fullName evidence="1">Glycerol-3-phosphate acyltransferase</fullName>
    </recommendedName>
    <alternativeName>
        <fullName evidence="1">Acyl-PO4 G3P acyltransferase</fullName>
    </alternativeName>
    <alternativeName>
        <fullName evidence="1">Acyl-phosphate--glycerol-3-phosphate acyltransferase</fullName>
    </alternativeName>
    <alternativeName>
        <fullName evidence="1">G3P acyltransferase</fullName>
        <shortName evidence="1">GPAT</shortName>
        <ecNumber evidence="1">2.3.1.275</ecNumber>
    </alternativeName>
    <alternativeName>
        <fullName evidence="1">Lysophosphatidic acid synthase</fullName>
        <shortName evidence="1">LPA synthase</shortName>
    </alternativeName>
</protein>
<accession>Q1GYU3</accession>
<organism>
    <name type="scientific">Methylobacillus flagellatus (strain ATCC 51484 / DSM 6875 / VKM B-1610 / KT)</name>
    <dbReference type="NCBI Taxonomy" id="265072"/>
    <lineage>
        <taxon>Bacteria</taxon>
        <taxon>Pseudomonadati</taxon>
        <taxon>Pseudomonadota</taxon>
        <taxon>Betaproteobacteria</taxon>
        <taxon>Nitrosomonadales</taxon>
        <taxon>Methylophilaceae</taxon>
        <taxon>Methylobacillus</taxon>
    </lineage>
</organism>
<sequence length="196" mass="20742">MNNAVFVIAAYLLGSISFGILVSKAFGLPDPRTVGSGNPGATNVLRSGKKLAALLTLLGDAAKGWLPVWLAQYYALPVGVVCWVAVAVFLGHLYPVFYRFKGGKGVATALGVLLAFSPLLAGLALLSWIVVFALTRFSSLAALTAAALAPGFAWLLLPQIGYIIVVFVLSLLLIWRHRSNIRKLLDGSEAGFGKKS</sequence>
<feature type="chain" id="PRO_1000064196" description="Glycerol-3-phosphate acyltransferase">
    <location>
        <begin position="1"/>
        <end position="196"/>
    </location>
</feature>
<feature type="transmembrane region" description="Helical" evidence="1">
    <location>
        <begin position="3"/>
        <end position="23"/>
    </location>
</feature>
<feature type="transmembrane region" description="Helical" evidence="1">
    <location>
        <begin position="78"/>
        <end position="98"/>
    </location>
</feature>
<feature type="transmembrane region" description="Helical" evidence="1">
    <location>
        <begin position="112"/>
        <end position="132"/>
    </location>
</feature>
<feature type="transmembrane region" description="Helical" evidence="1">
    <location>
        <begin position="154"/>
        <end position="174"/>
    </location>
</feature>
<reference key="1">
    <citation type="submission" date="2006-03" db="EMBL/GenBank/DDBJ databases">
        <title>Complete sequence of Methylobacillus flagellatus KT.</title>
        <authorList>
            <consortium name="US DOE Joint Genome Institute"/>
            <person name="Copeland A."/>
            <person name="Lucas S."/>
            <person name="Lapidus A."/>
            <person name="Barry K."/>
            <person name="Detter J.C."/>
            <person name="Glavina del Rio T."/>
            <person name="Hammon N."/>
            <person name="Israni S."/>
            <person name="Dalin E."/>
            <person name="Tice H."/>
            <person name="Pitluck S."/>
            <person name="Brettin T."/>
            <person name="Bruce D."/>
            <person name="Han C."/>
            <person name="Tapia R."/>
            <person name="Saunders E."/>
            <person name="Gilna P."/>
            <person name="Schmutz J."/>
            <person name="Larimer F."/>
            <person name="Land M."/>
            <person name="Kyrpides N."/>
            <person name="Anderson I."/>
            <person name="Richardson P."/>
        </authorList>
    </citation>
    <scope>NUCLEOTIDE SEQUENCE [LARGE SCALE GENOMIC DNA]</scope>
    <source>
        <strain>ATCC 51484 / DSM 6875 / VKM B-1610 / KT</strain>
    </source>
</reference>
<gene>
    <name evidence="1" type="primary">plsY</name>
    <name type="ordered locus">Mfla_2327</name>
</gene>
<evidence type="ECO:0000255" key="1">
    <source>
        <dbReference type="HAMAP-Rule" id="MF_01043"/>
    </source>
</evidence>